<sequence length="447" mass="50100">MGFGDFLSKRMQKSIEKNMKNSTLNEENIKETLKEIRLSLLEADVNIEAAKEIINNVKQKALGGYISEGASAHQQMIKIVHEELVNILGKENAPLDINKKPSVVMMVGLQGSGKTTTANKLAYLLNKKNKKKVLLVGLDIYRPGAIEQLVQLGQKTNTQVFEKGKQDPVKTAEQALEYAKENNFDVVILDTAGRLQVDQVLMKELDNLKKKTSPNEILLVVDGMSGQEIINVTNEFNDKLKLSGVVVTKLDGDARGGATLSISYLTKLPIKFIGEGEGYNALAAFYPKRMADRLMGMGDIETLFERAVENIDERSIQKTMNRMFLGQFDLEDLRNQLAQIAKMGSLNKLMKMLPINKVSESQIQEAQRKLAVFSILMDSMTLKERRDPRVLKAISRKNRIIKGSGRSEKEFNELINSFEKGKKQVLEITKMIKSGRMPNLSKGGFKF</sequence>
<reference key="1">
    <citation type="journal article" date="1992" name="Nucleic Acids Res.">
        <title>A Mycoplasma protein homologous to mammalian SRP54 recognizes a highly conserved domain of SRP RNA.</title>
        <authorList>
            <person name="Samuelsson T.B."/>
        </authorList>
    </citation>
    <scope>NUCLEOTIDE SEQUENCE [GENOMIC DNA]</scope>
    <scope>INTERACTION WITH RNA</scope>
</reference>
<protein>
    <recommendedName>
        <fullName evidence="1">Signal recognition particle protein</fullName>
        <ecNumber evidence="1">3.6.5.4</ecNumber>
    </recommendedName>
    <alternativeName>
        <fullName evidence="1">Fifty-four homolog</fullName>
    </alternativeName>
</protein>
<name>SRP54_MYCMY</name>
<evidence type="ECO:0000255" key="1">
    <source>
        <dbReference type="HAMAP-Rule" id="MF_00306"/>
    </source>
</evidence>
<evidence type="ECO:0000269" key="2">
    <source>
    </source>
</evidence>
<organism>
    <name type="scientific">Mycoplasma mycoides</name>
    <dbReference type="NCBI Taxonomy" id="2102"/>
    <lineage>
        <taxon>Bacteria</taxon>
        <taxon>Bacillati</taxon>
        <taxon>Mycoplasmatota</taxon>
        <taxon>Mollicutes</taxon>
        <taxon>Mycoplasmataceae</taxon>
        <taxon>Mycoplasma</taxon>
    </lineage>
</organism>
<gene>
    <name evidence="1" type="primary">ffh</name>
    <name type="synonym">srpM54</name>
</gene>
<feature type="chain" id="PRO_0000101160" description="Signal recognition particle protein">
    <location>
        <begin position="1"/>
        <end position="447"/>
    </location>
</feature>
<feature type="binding site" evidence="1">
    <location>
        <begin position="108"/>
        <end position="115"/>
    </location>
    <ligand>
        <name>GTP</name>
        <dbReference type="ChEBI" id="CHEBI:37565"/>
    </ligand>
</feature>
<feature type="binding site" evidence="1">
    <location>
        <begin position="190"/>
        <end position="194"/>
    </location>
    <ligand>
        <name>GTP</name>
        <dbReference type="ChEBI" id="CHEBI:37565"/>
    </ligand>
</feature>
<feature type="binding site" evidence="1">
    <location>
        <begin position="248"/>
        <end position="251"/>
    </location>
    <ligand>
        <name>GTP</name>
        <dbReference type="ChEBI" id="CHEBI:37565"/>
    </ligand>
</feature>
<comment type="function">
    <text evidence="1">Involved in targeting and insertion of nascent membrane proteins into the cytoplasmic membrane. Binds to the hydrophobic signal sequence of the ribosome-nascent chain (RNC) as it emerges from the ribosomes. The SRP-RNC complex is then targeted to the cytoplasmic membrane where it interacts with the SRP receptor FtsY.</text>
</comment>
<comment type="catalytic activity">
    <reaction evidence="1">
        <text>GTP + H2O = GDP + phosphate + H(+)</text>
        <dbReference type="Rhea" id="RHEA:19669"/>
        <dbReference type="ChEBI" id="CHEBI:15377"/>
        <dbReference type="ChEBI" id="CHEBI:15378"/>
        <dbReference type="ChEBI" id="CHEBI:37565"/>
        <dbReference type="ChEBI" id="CHEBI:43474"/>
        <dbReference type="ChEBI" id="CHEBI:58189"/>
        <dbReference type="EC" id="3.6.5.4"/>
    </reaction>
</comment>
<comment type="subunit">
    <text evidence="1 2">Part of the signal recognition particle protein translocation system, which is composed of SRP and FtsY (By similarity). Interacts with RNA.</text>
</comment>
<comment type="subcellular location">
    <subcellularLocation>
        <location evidence="1">Cytoplasm</location>
    </subcellularLocation>
    <text evidence="1">The SRP-RNC complex is targeted to the cytoplasmic membrane.</text>
</comment>
<comment type="domain">
    <text evidence="1">Composed of three domains: the N-terminal N domain, which is responsible for interactions with the ribosome, the central G domain, which binds GTP, and the C-terminal M domain, which binds the RNA and the signal sequence of the RNC.</text>
</comment>
<comment type="similarity">
    <text evidence="1">Belongs to the GTP-binding SRP family. SRP54 subfamily.</text>
</comment>
<accession>Q01442</accession>
<dbReference type="EC" id="3.6.5.4" evidence="1"/>
<dbReference type="EMBL" id="M91593">
    <property type="protein sequence ID" value="AAA25441.1"/>
    <property type="molecule type" value="Genomic_DNA"/>
</dbReference>
<dbReference type="PIR" id="S35481">
    <property type="entry name" value="S35481"/>
</dbReference>
<dbReference type="SMR" id="Q01442"/>
<dbReference type="GeneID" id="93426433"/>
<dbReference type="GO" id="GO:0048500">
    <property type="term" value="C:signal recognition particle"/>
    <property type="evidence" value="ECO:0007669"/>
    <property type="project" value="UniProtKB-UniRule"/>
</dbReference>
<dbReference type="GO" id="GO:0008312">
    <property type="term" value="F:7S RNA binding"/>
    <property type="evidence" value="ECO:0007669"/>
    <property type="project" value="InterPro"/>
</dbReference>
<dbReference type="GO" id="GO:0016887">
    <property type="term" value="F:ATP hydrolysis activity"/>
    <property type="evidence" value="ECO:0007669"/>
    <property type="project" value="InterPro"/>
</dbReference>
<dbReference type="GO" id="GO:0005525">
    <property type="term" value="F:GTP binding"/>
    <property type="evidence" value="ECO:0007669"/>
    <property type="project" value="UniProtKB-UniRule"/>
</dbReference>
<dbReference type="GO" id="GO:0003924">
    <property type="term" value="F:GTPase activity"/>
    <property type="evidence" value="ECO:0007669"/>
    <property type="project" value="UniProtKB-UniRule"/>
</dbReference>
<dbReference type="GO" id="GO:0006614">
    <property type="term" value="P:SRP-dependent cotranslational protein targeting to membrane"/>
    <property type="evidence" value="ECO:0007669"/>
    <property type="project" value="InterPro"/>
</dbReference>
<dbReference type="CDD" id="cd18539">
    <property type="entry name" value="SRP_G"/>
    <property type="match status" value="1"/>
</dbReference>
<dbReference type="Gene3D" id="3.40.50.300">
    <property type="entry name" value="P-loop containing nucleotide triphosphate hydrolases"/>
    <property type="match status" value="1"/>
</dbReference>
<dbReference type="Gene3D" id="1.20.120.140">
    <property type="entry name" value="Signal recognition particle SRP54, nucleotide-binding domain"/>
    <property type="match status" value="1"/>
</dbReference>
<dbReference type="Gene3D" id="1.10.260.30">
    <property type="entry name" value="Signal recognition particle, SRP54 subunit, M-domain"/>
    <property type="match status" value="1"/>
</dbReference>
<dbReference type="HAMAP" id="MF_00306">
    <property type="entry name" value="SRP54"/>
    <property type="match status" value="1"/>
</dbReference>
<dbReference type="InterPro" id="IPR003593">
    <property type="entry name" value="AAA+_ATPase"/>
</dbReference>
<dbReference type="InterPro" id="IPR027417">
    <property type="entry name" value="P-loop_NTPase"/>
</dbReference>
<dbReference type="InterPro" id="IPR036891">
    <property type="entry name" value="Signal_recog_part_SRP54_M_sf"/>
</dbReference>
<dbReference type="InterPro" id="IPR013822">
    <property type="entry name" value="Signal_recog_particl_SRP54_hlx"/>
</dbReference>
<dbReference type="InterPro" id="IPR004125">
    <property type="entry name" value="Signal_recog_particle_SRP54_M"/>
</dbReference>
<dbReference type="InterPro" id="IPR004780">
    <property type="entry name" value="SRP"/>
</dbReference>
<dbReference type="InterPro" id="IPR022941">
    <property type="entry name" value="SRP54"/>
</dbReference>
<dbReference type="InterPro" id="IPR000897">
    <property type="entry name" value="SRP54_GTPase_dom"/>
</dbReference>
<dbReference type="InterPro" id="IPR042101">
    <property type="entry name" value="SRP54_N_sf"/>
</dbReference>
<dbReference type="NCBIfam" id="TIGR00959">
    <property type="entry name" value="ffh"/>
    <property type="match status" value="1"/>
</dbReference>
<dbReference type="PANTHER" id="PTHR11564">
    <property type="entry name" value="SIGNAL RECOGNITION PARTICLE 54K PROTEIN SRP54"/>
    <property type="match status" value="1"/>
</dbReference>
<dbReference type="PANTHER" id="PTHR11564:SF5">
    <property type="entry name" value="SIGNAL RECOGNITION PARTICLE SUBUNIT SRP54"/>
    <property type="match status" value="1"/>
</dbReference>
<dbReference type="Pfam" id="PF00448">
    <property type="entry name" value="SRP54"/>
    <property type="match status" value="1"/>
</dbReference>
<dbReference type="Pfam" id="PF02881">
    <property type="entry name" value="SRP54_N"/>
    <property type="match status" value="1"/>
</dbReference>
<dbReference type="Pfam" id="PF02978">
    <property type="entry name" value="SRP_SPB"/>
    <property type="match status" value="1"/>
</dbReference>
<dbReference type="SMART" id="SM00382">
    <property type="entry name" value="AAA"/>
    <property type="match status" value="1"/>
</dbReference>
<dbReference type="SMART" id="SM00962">
    <property type="entry name" value="SRP54"/>
    <property type="match status" value="1"/>
</dbReference>
<dbReference type="SMART" id="SM00963">
    <property type="entry name" value="SRP54_N"/>
    <property type="match status" value="1"/>
</dbReference>
<dbReference type="SUPFAM" id="SSF52540">
    <property type="entry name" value="P-loop containing nucleoside triphosphate hydrolases"/>
    <property type="match status" value="1"/>
</dbReference>
<dbReference type="SUPFAM" id="SSF47446">
    <property type="entry name" value="Signal peptide-binding domain"/>
    <property type="match status" value="1"/>
</dbReference>
<dbReference type="PROSITE" id="PS00300">
    <property type="entry name" value="SRP54"/>
    <property type="match status" value="1"/>
</dbReference>
<keyword id="KW-0963">Cytoplasm</keyword>
<keyword id="KW-0342">GTP-binding</keyword>
<keyword id="KW-0378">Hydrolase</keyword>
<keyword id="KW-0547">Nucleotide-binding</keyword>
<keyword id="KW-0687">Ribonucleoprotein</keyword>
<keyword id="KW-0694">RNA-binding</keyword>
<keyword id="KW-0733">Signal recognition particle</keyword>
<proteinExistence type="evidence at protein level"/>